<organism>
    <name type="scientific">Conus lividus</name>
    <name type="common">Livid cone</name>
    <dbReference type="NCBI Taxonomy" id="89426"/>
    <lineage>
        <taxon>Eukaryota</taxon>
        <taxon>Metazoa</taxon>
        <taxon>Spiralia</taxon>
        <taxon>Lophotrochozoa</taxon>
        <taxon>Mollusca</taxon>
        <taxon>Gastropoda</taxon>
        <taxon>Caenogastropoda</taxon>
        <taxon>Neogastropoda</taxon>
        <taxon>Conoidea</taxon>
        <taxon>Conidae</taxon>
        <taxon>Conus</taxon>
        <taxon>Lividoconus</taxon>
    </lineage>
</organism>
<evidence type="ECO:0000250" key="1"/>
<evidence type="ECO:0000255" key="2"/>
<evidence type="ECO:0000305" key="3"/>
<protein>
    <recommendedName>
        <fullName>Conotoxin LvVIB</fullName>
    </recommendedName>
</protein>
<proteinExistence type="evidence at transcript level"/>
<comment type="subcellular location">
    <subcellularLocation>
        <location evidence="1">Secreted</location>
    </subcellularLocation>
</comment>
<comment type="tissue specificity">
    <text>Expressed by the venom duct.</text>
</comment>
<comment type="domain">
    <text evidence="1">The presence of a 'disulfide through disulfide knot' structurally defines this protein as a knottin.</text>
</comment>
<comment type="domain">
    <text>The cysteine framework is VI/VII (C-C-CC-C-C).</text>
</comment>
<comment type="similarity">
    <text evidence="3">Belongs to the conotoxin O1 superfamily.</text>
</comment>
<sequence>VLIIAVLFLTASELVTADYTRDKWQYRAASLRDAMRNFRDTRCSPGGEVCTRHSPCCTGFLCNHIGGMCHH</sequence>
<accession>Q9TW08</accession>
<accession>Q9UAA0</accession>
<accession>Q9UAA1</accession>
<accession>Q9UAA6</accession>
<accession>Q9UAA8</accession>
<accession>Q9UAA9</accession>
<reference key="1">
    <citation type="journal article" date="1999" name="Proc. Natl. Acad. Sci. U.S.A.">
        <title>Molecular genetics of ecological diversification: duplication and rapid evolution of toxin genes of the venomous gastropod Conus.</title>
        <authorList>
            <person name="Duda T.F. Jr."/>
            <person name="Palumbi S.R."/>
        </authorList>
    </citation>
    <scope>NUCLEOTIDE SEQUENCE [MRNA]</scope>
    <source>
        <tissue>Venom duct</tissue>
    </source>
</reference>
<reference key="2">
    <citation type="journal article" date="2004" name="Proc. R. Soc. B">
        <title>Gene expression and feeding ecology: evolution of piscivory in the venomous gastropod genus Conus.</title>
        <authorList>
            <person name="Duda T.F. Jr."/>
            <person name="Palumbi S.R."/>
        </authorList>
    </citation>
    <scope>NUCLEOTIDE SEQUENCE [MRNA]</scope>
    <source>
        <tissue>Venom duct</tissue>
    </source>
</reference>
<feature type="signal peptide" evidence="2">
    <location>
        <begin position="1" status="less than"/>
        <end position="17"/>
    </location>
</feature>
<feature type="propeptide" id="PRO_0000392142" evidence="1">
    <location>
        <begin position="18"/>
        <end position="41"/>
    </location>
</feature>
<feature type="peptide" id="PRO_0000392143" description="Conotoxin LvVIB">
    <location>
        <begin position="43"/>
        <end position="71"/>
    </location>
</feature>
<feature type="disulfide bond" evidence="1">
    <location>
        <begin position="43"/>
        <end position="57"/>
    </location>
</feature>
<feature type="disulfide bond" evidence="1">
    <location>
        <begin position="50"/>
        <end position="62"/>
    </location>
</feature>
<feature type="disulfide bond" evidence="1">
    <location>
        <begin position="56"/>
        <end position="69"/>
    </location>
</feature>
<feature type="sequence conflict" description="In Ref. 1 and 2; AAD48166." evidence="3" ref="1 2">
    <original>L</original>
    <variation>V</variation>
    <location>
        <position position="2"/>
    </location>
</feature>
<feature type="sequence conflict" description="In Ref. 1 and 2; AAD48224." evidence="3" ref="1 2">
    <original>L</original>
    <variation>P</variation>
    <location>
        <position position="7"/>
    </location>
</feature>
<feature type="sequence conflict" description="In Ref. 1 and 2; AAD48189." evidence="3" ref="1 2">
    <original>F</original>
    <variation>S</variation>
    <location>
        <position position="8"/>
    </location>
</feature>
<feature type="sequence conflict" description="In Ref. 1 and 2; AAD48164." evidence="3" ref="1 2">
    <original>RH</original>
    <variation>SK</variation>
    <location>
        <begin position="52"/>
        <end position="53"/>
    </location>
</feature>
<feature type="sequence conflict" description="In Ref. 1 and 2; AAD48164." evidence="3" ref="1 2">
    <original>N</original>
    <variation>S</variation>
    <location>
        <position position="63"/>
    </location>
</feature>
<feature type="sequence conflict" description="In Ref. 1 and 2; AAD48217." evidence="3" ref="1 2">
    <original>H</original>
    <variation>P</variation>
    <location>
        <position position="71"/>
    </location>
</feature>
<feature type="non-terminal residue">
    <location>
        <position position="1"/>
    </location>
</feature>
<name>O16B_CONLI</name>
<dbReference type="EMBL" id="AF089908">
    <property type="protein sequence ID" value="AAD48164.1"/>
    <property type="molecule type" value="mRNA"/>
</dbReference>
<dbReference type="EMBL" id="AF089911">
    <property type="protein sequence ID" value="AAD48166.1"/>
    <property type="molecule type" value="mRNA"/>
</dbReference>
<dbReference type="EMBL" id="AF089934">
    <property type="protein sequence ID" value="AAD48189.1"/>
    <property type="molecule type" value="mRNA"/>
</dbReference>
<dbReference type="EMBL" id="AF089935">
    <property type="protein sequence ID" value="AAD48190.1"/>
    <property type="molecule type" value="mRNA"/>
</dbReference>
<dbReference type="EMBL" id="AF089936">
    <property type="protein sequence ID" value="AAD48191.1"/>
    <property type="molecule type" value="mRNA"/>
</dbReference>
<dbReference type="EMBL" id="AF089937">
    <property type="protein sequence ID" value="AAD48192.1"/>
    <property type="molecule type" value="mRNA"/>
</dbReference>
<dbReference type="EMBL" id="AF089938">
    <property type="protein sequence ID" value="AAD48193.1"/>
    <property type="molecule type" value="mRNA"/>
</dbReference>
<dbReference type="EMBL" id="AF089939">
    <property type="protein sequence ID" value="AAD48194.1"/>
    <property type="molecule type" value="mRNA"/>
</dbReference>
<dbReference type="EMBL" id="AF089940">
    <property type="protein sequence ID" value="AAD48195.1"/>
    <property type="molecule type" value="mRNA"/>
</dbReference>
<dbReference type="EMBL" id="AF089957">
    <property type="protein sequence ID" value="AAD48212.1"/>
    <property type="molecule type" value="mRNA"/>
</dbReference>
<dbReference type="EMBL" id="AF089960">
    <property type="protein sequence ID" value="AAD48215.1"/>
    <property type="molecule type" value="mRNA"/>
</dbReference>
<dbReference type="EMBL" id="AF089961">
    <property type="protein sequence ID" value="AAD48216.1"/>
    <property type="molecule type" value="mRNA"/>
</dbReference>
<dbReference type="EMBL" id="AF089962">
    <property type="protein sequence ID" value="AAD48217.1"/>
    <property type="molecule type" value="mRNA"/>
</dbReference>
<dbReference type="EMBL" id="AF089963">
    <property type="protein sequence ID" value="AAD48218.1"/>
    <property type="molecule type" value="mRNA"/>
</dbReference>
<dbReference type="EMBL" id="AF089964">
    <property type="protein sequence ID" value="AAD48219.1"/>
    <property type="molecule type" value="mRNA"/>
</dbReference>
<dbReference type="EMBL" id="AF089965">
    <property type="protein sequence ID" value="AAD48220.1"/>
    <property type="molecule type" value="mRNA"/>
</dbReference>
<dbReference type="EMBL" id="AF089966">
    <property type="protein sequence ID" value="AAD48221.1"/>
    <property type="molecule type" value="mRNA"/>
</dbReference>
<dbReference type="EMBL" id="AF089967">
    <property type="protein sequence ID" value="AAD48222.1"/>
    <property type="molecule type" value="mRNA"/>
</dbReference>
<dbReference type="EMBL" id="AF089968">
    <property type="protein sequence ID" value="AAD48223.1"/>
    <property type="molecule type" value="mRNA"/>
</dbReference>
<dbReference type="EMBL" id="AF089969">
    <property type="protein sequence ID" value="AAD48224.1"/>
    <property type="molecule type" value="mRNA"/>
</dbReference>
<dbReference type="EMBL" id="AF089970">
    <property type="protein sequence ID" value="AAD48225.1"/>
    <property type="molecule type" value="mRNA"/>
</dbReference>
<dbReference type="SMR" id="Q9TW08"/>
<dbReference type="ConoServer" id="886">
    <property type="toxin name" value="LvVIA 3 precursor"/>
</dbReference>
<dbReference type="ConoServer" id="888">
    <property type="toxin name" value="LvVIB 1 precursor"/>
</dbReference>
<dbReference type="ConoServer" id="911">
    <property type="toxin name" value="LvVIB 1 precursor"/>
</dbReference>
<dbReference type="ConoServer" id="912">
    <property type="toxin name" value="LvVIB 1 precursor"/>
</dbReference>
<dbReference type="ConoServer" id="946">
    <property type="toxin name" value="LvVIB 1 precursor"/>
</dbReference>
<dbReference type="ConoServer" id="939">
    <property type="toxin name" value="LvVIB 2 precursor"/>
</dbReference>
<dbReference type="GO" id="GO:0005576">
    <property type="term" value="C:extracellular region"/>
    <property type="evidence" value="ECO:0007669"/>
    <property type="project" value="UniProtKB-SubCell"/>
</dbReference>
<dbReference type="GO" id="GO:0008200">
    <property type="term" value="F:ion channel inhibitor activity"/>
    <property type="evidence" value="ECO:0007669"/>
    <property type="project" value="InterPro"/>
</dbReference>
<dbReference type="GO" id="GO:0090729">
    <property type="term" value="F:toxin activity"/>
    <property type="evidence" value="ECO:0007669"/>
    <property type="project" value="UniProtKB-KW"/>
</dbReference>
<dbReference type="InterPro" id="IPR004214">
    <property type="entry name" value="Conotoxin"/>
</dbReference>
<dbReference type="Pfam" id="PF02950">
    <property type="entry name" value="Conotoxin"/>
    <property type="match status" value="1"/>
</dbReference>
<keyword id="KW-1015">Disulfide bond</keyword>
<keyword id="KW-0960">Knottin</keyword>
<keyword id="KW-0964">Secreted</keyword>
<keyword id="KW-0732">Signal</keyword>
<keyword id="KW-0800">Toxin</keyword>